<reference key="1">
    <citation type="journal article" date="2001" name="Plant Cell">
        <title>Evidence for an important role of WRKY DNA binding proteins in the regulation of NPR1 gene expression.</title>
        <authorList>
            <person name="Yu D."/>
            <person name="Chen C."/>
            <person name="Chen Z."/>
        </authorList>
    </citation>
    <scope>NUCLEOTIDE SEQUENCE [MRNA]</scope>
    <scope>INDUCTION</scope>
</reference>
<reference key="2">
    <citation type="journal article" date="1999" name="Nature">
        <title>Sequence and analysis of chromosome 4 of the plant Arabidopsis thaliana.</title>
        <authorList>
            <person name="Mayer K.F.X."/>
            <person name="Schueller C."/>
            <person name="Wambutt R."/>
            <person name="Murphy G."/>
            <person name="Volckaert G."/>
            <person name="Pohl T."/>
            <person name="Duesterhoeft A."/>
            <person name="Stiekema W."/>
            <person name="Entian K.-D."/>
            <person name="Terryn N."/>
            <person name="Harris B."/>
            <person name="Ansorge W."/>
            <person name="Brandt P."/>
            <person name="Grivell L.A."/>
            <person name="Rieger M."/>
            <person name="Weichselgartner M."/>
            <person name="de Simone V."/>
            <person name="Obermaier B."/>
            <person name="Mache R."/>
            <person name="Mueller M."/>
            <person name="Kreis M."/>
            <person name="Delseny M."/>
            <person name="Puigdomenech P."/>
            <person name="Watson M."/>
            <person name="Schmidtheini T."/>
            <person name="Reichert B."/>
            <person name="Portetelle D."/>
            <person name="Perez-Alonso M."/>
            <person name="Boutry M."/>
            <person name="Bancroft I."/>
            <person name="Vos P."/>
            <person name="Hoheisel J."/>
            <person name="Zimmermann W."/>
            <person name="Wedler H."/>
            <person name="Ridley P."/>
            <person name="Langham S.-A."/>
            <person name="McCullagh B."/>
            <person name="Bilham L."/>
            <person name="Robben J."/>
            <person name="van der Schueren J."/>
            <person name="Grymonprez B."/>
            <person name="Chuang Y.-J."/>
            <person name="Vandenbussche F."/>
            <person name="Braeken M."/>
            <person name="Weltjens I."/>
            <person name="Voet M."/>
            <person name="Bastiaens I."/>
            <person name="Aert R."/>
            <person name="Defoor E."/>
            <person name="Weitzenegger T."/>
            <person name="Bothe G."/>
            <person name="Ramsperger U."/>
            <person name="Hilbert H."/>
            <person name="Braun M."/>
            <person name="Holzer E."/>
            <person name="Brandt A."/>
            <person name="Peters S."/>
            <person name="van Staveren M."/>
            <person name="Dirkse W."/>
            <person name="Mooijman P."/>
            <person name="Klein Lankhorst R."/>
            <person name="Rose M."/>
            <person name="Hauf J."/>
            <person name="Koetter P."/>
            <person name="Berneiser S."/>
            <person name="Hempel S."/>
            <person name="Feldpausch M."/>
            <person name="Lamberth S."/>
            <person name="Van den Daele H."/>
            <person name="De Keyser A."/>
            <person name="Buysshaert C."/>
            <person name="Gielen J."/>
            <person name="Villarroel R."/>
            <person name="De Clercq R."/>
            <person name="van Montagu M."/>
            <person name="Rogers J."/>
            <person name="Cronin A."/>
            <person name="Quail M.A."/>
            <person name="Bray-Allen S."/>
            <person name="Clark L."/>
            <person name="Doggett J."/>
            <person name="Hall S."/>
            <person name="Kay M."/>
            <person name="Lennard N."/>
            <person name="McLay K."/>
            <person name="Mayes R."/>
            <person name="Pettett A."/>
            <person name="Rajandream M.A."/>
            <person name="Lyne M."/>
            <person name="Benes V."/>
            <person name="Rechmann S."/>
            <person name="Borkova D."/>
            <person name="Bloecker H."/>
            <person name="Scharfe M."/>
            <person name="Grimm M."/>
            <person name="Loehnert T.-H."/>
            <person name="Dose S."/>
            <person name="de Haan M."/>
            <person name="Maarse A.C."/>
            <person name="Schaefer M."/>
            <person name="Mueller-Auer S."/>
            <person name="Gabel C."/>
            <person name="Fuchs M."/>
            <person name="Fartmann B."/>
            <person name="Granderath K."/>
            <person name="Dauner D."/>
            <person name="Herzl A."/>
            <person name="Neumann S."/>
            <person name="Argiriou A."/>
            <person name="Vitale D."/>
            <person name="Liguori R."/>
            <person name="Piravandi E."/>
            <person name="Massenet O."/>
            <person name="Quigley F."/>
            <person name="Clabauld G."/>
            <person name="Muendlein A."/>
            <person name="Felber R."/>
            <person name="Schnabl S."/>
            <person name="Hiller R."/>
            <person name="Schmidt W."/>
            <person name="Lecharny A."/>
            <person name="Aubourg S."/>
            <person name="Chefdor F."/>
            <person name="Cooke R."/>
            <person name="Berger C."/>
            <person name="Monfort A."/>
            <person name="Casacuberta E."/>
            <person name="Gibbons T."/>
            <person name="Weber N."/>
            <person name="Vandenbol M."/>
            <person name="Bargues M."/>
            <person name="Terol J."/>
            <person name="Torres A."/>
            <person name="Perez-Perez A."/>
            <person name="Purnelle B."/>
            <person name="Bent E."/>
            <person name="Johnson S."/>
            <person name="Tacon D."/>
            <person name="Jesse T."/>
            <person name="Heijnen L."/>
            <person name="Schwarz S."/>
            <person name="Scholler P."/>
            <person name="Heber S."/>
            <person name="Francs P."/>
            <person name="Bielke C."/>
            <person name="Frishman D."/>
            <person name="Haase D."/>
            <person name="Lemcke K."/>
            <person name="Mewes H.-W."/>
            <person name="Stocker S."/>
            <person name="Zaccaria P."/>
            <person name="Bevan M."/>
            <person name="Wilson R.K."/>
            <person name="de la Bastide M."/>
            <person name="Habermann K."/>
            <person name="Parnell L."/>
            <person name="Dedhia N."/>
            <person name="Gnoj L."/>
            <person name="Schutz K."/>
            <person name="Huang E."/>
            <person name="Spiegel L."/>
            <person name="Sekhon M."/>
            <person name="Murray J."/>
            <person name="Sheet P."/>
            <person name="Cordes M."/>
            <person name="Abu-Threideh J."/>
            <person name="Stoneking T."/>
            <person name="Kalicki J."/>
            <person name="Graves T."/>
            <person name="Harmon G."/>
            <person name="Edwards J."/>
            <person name="Latreille P."/>
            <person name="Courtney L."/>
            <person name="Cloud J."/>
            <person name="Abbott A."/>
            <person name="Scott K."/>
            <person name="Johnson D."/>
            <person name="Minx P."/>
            <person name="Bentley D."/>
            <person name="Fulton B."/>
            <person name="Miller N."/>
            <person name="Greco T."/>
            <person name="Kemp K."/>
            <person name="Kramer J."/>
            <person name="Fulton L."/>
            <person name="Mardis E."/>
            <person name="Dante M."/>
            <person name="Pepin K."/>
            <person name="Hillier L.W."/>
            <person name="Nelson J."/>
            <person name="Spieth J."/>
            <person name="Ryan E."/>
            <person name="Andrews S."/>
            <person name="Geisel C."/>
            <person name="Layman D."/>
            <person name="Du H."/>
            <person name="Ali J."/>
            <person name="Berghoff A."/>
            <person name="Jones K."/>
            <person name="Drone K."/>
            <person name="Cotton M."/>
            <person name="Joshu C."/>
            <person name="Antonoiu B."/>
            <person name="Zidanic M."/>
            <person name="Strong C."/>
            <person name="Sun H."/>
            <person name="Lamar B."/>
            <person name="Yordan C."/>
            <person name="Ma P."/>
            <person name="Zhong J."/>
            <person name="Preston R."/>
            <person name="Vil D."/>
            <person name="Shekher M."/>
            <person name="Matero A."/>
            <person name="Shah R."/>
            <person name="Swaby I.K."/>
            <person name="O'Shaughnessy A."/>
            <person name="Rodriguez M."/>
            <person name="Hoffman J."/>
            <person name="Till S."/>
            <person name="Granat S."/>
            <person name="Shohdy N."/>
            <person name="Hasegawa A."/>
            <person name="Hameed A."/>
            <person name="Lodhi M."/>
            <person name="Johnson A."/>
            <person name="Chen E."/>
            <person name="Marra M.A."/>
            <person name="Martienssen R."/>
            <person name="McCombie W.R."/>
        </authorList>
    </citation>
    <scope>NUCLEOTIDE SEQUENCE [LARGE SCALE GENOMIC DNA]</scope>
    <source>
        <strain>cv. Columbia</strain>
    </source>
</reference>
<reference key="3">
    <citation type="journal article" date="2017" name="Plant J.">
        <title>Araport11: a complete reannotation of the Arabidopsis thaliana reference genome.</title>
        <authorList>
            <person name="Cheng C.Y."/>
            <person name="Krishnakumar V."/>
            <person name="Chan A.P."/>
            <person name="Thibaud-Nissen F."/>
            <person name="Schobel S."/>
            <person name="Town C.D."/>
        </authorList>
    </citation>
    <scope>GENOME REANNOTATION</scope>
    <source>
        <strain>cv. Columbia</strain>
    </source>
</reference>
<reference key="4">
    <citation type="journal article" date="2003" name="Science">
        <title>Empirical analysis of transcriptional activity in the Arabidopsis genome.</title>
        <authorList>
            <person name="Yamada K."/>
            <person name="Lim J."/>
            <person name="Dale J.M."/>
            <person name="Chen H."/>
            <person name="Shinn P."/>
            <person name="Palm C.J."/>
            <person name="Southwick A.M."/>
            <person name="Wu H.C."/>
            <person name="Kim C.J."/>
            <person name="Nguyen M."/>
            <person name="Pham P.K."/>
            <person name="Cheuk R.F."/>
            <person name="Karlin-Newmann G."/>
            <person name="Liu S.X."/>
            <person name="Lam B."/>
            <person name="Sakano H."/>
            <person name="Wu T."/>
            <person name="Yu G."/>
            <person name="Miranda M."/>
            <person name="Quach H.L."/>
            <person name="Tripp M."/>
            <person name="Chang C.H."/>
            <person name="Lee J.M."/>
            <person name="Toriumi M.J."/>
            <person name="Chan M.M."/>
            <person name="Tang C.C."/>
            <person name="Onodera C.S."/>
            <person name="Deng J.M."/>
            <person name="Akiyama K."/>
            <person name="Ansari Y."/>
            <person name="Arakawa T."/>
            <person name="Banh J."/>
            <person name="Banno F."/>
            <person name="Bowser L."/>
            <person name="Brooks S.Y."/>
            <person name="Carninci P."/>
            <person name="Chao Q."/>
            <person name="Choy N."/>
            <person name="Enju A."/>
            <person name="Goldsmith A.D."/>
            <person name="Gurjal M."/>
            <person name="Hansen N.F."/>
            <person name="Hayashizaki Y."/>
            <person name="Johnson-Hopson C."/>
            <person name="Hsuan V.W."/>
            <person name="Iida K."/>
            <person name="Karnes M."/>
            <person name="Khan S."/>
            <person name="Koesema E."/>
            <person name="Ishida J."/>
            <person name="Jiang P.X."/>
            <person name="Jones T."/>
            <person name="Kawai J."/>
            <person name="Kamiya A."/>
            <person name="Meyers C."/>
            <person name="Nakajima M."/>
            <person name="Narusaka M."/>
            <person name="Seki M."/>
            <person name="Sakurai T."/>
            <person name="Satou M."/>
            <person name="Tamse R."/>
            <person name="Vaysberg M."/>
            <person name="Wallender E.K."/>
            <person name="Wong C."/>
            <person name="Yamamura Y."/>
            <person name="Yuan S."/>
            <person name="Shinozaki K."/>
            <person name="Davis R.W."/>
            <person name="Theologis A."/>
            <person name="Ecker J.R."/>
        </authorList>
    </citation>
    <scope>NUCLEOTIDE SEQUENCE [LARGE SCALE MRNA]</scope>
    <source>
        <strain>cv. Columbia</strain>
    </source>
</reference>
<reference key="5">
    <citation type="submission" date="2006-07" db="EMBL/GenBank/DDBJ databases">
        <title>Large-scale analysis of RIKEN Arabidopsis full-length (RAFL) cDNAs.</title>
        <authorList>
            <person name="Totoki Y."/>
            <person name="Seki M."/>
            <person name="Ishida J."/>
            <person name="Nakajima M."/>
            <person name="Enju A."/>
            <person name="Kamiya A."/>
            <person name="Narusaka M."/>
            <person name="Shin-i T."/>
            <person name="Nakagawa M."/>
            <person name="Sakamoto N."/>
            <person name="Oishi K."/>
            <person name="Kohara Y."/>
            <person name="Kobayashi M."/>
            <person name="Toyoda A."/>
            <person name="Sakaki Y."/>
            <person name="Sakurai T."/>
            <person name="Iida K."/>
            <person name="Akiyama K."/>
            <person name="Satou M."/>
            <person name="Toyoda T."/>
            <person name="Konagaya A."/>
            <person name="Carninci P."/>
            <person name="Kawai J."/>
            <person name="Hayashizaki Y."/>
            <person name="Shinozaki K."/>
        </authorList>
    </citation>
    <scope>NUCLEOTIDE SEQUENCE [LARGE SCALE MRNA]</scope>
    <source>
        <strain>cv. Columbia</strain>
    </source>
</reference>
<reference key="6">
    <citation type="submission" date="2008-07" db="EMBL/GenBank/DDBJ databases">
        <title>Arabidopsis ORF clones.</title>
        <authorList>
            <person name="De Los Reyes C."/>
            <person name="Quan R."/>
            <person name="Chen H."/>
            <person name="Bautista V.R."/>
            <person name="Kim C.J."/>
            <person name="Ecker J.R."/>
        </authorList>
    </citation>
    <scope>NUCLEOTIDE SEQUENCE [LARGE SCALE MRNA]</scope>
</reference>
<reference key="7">
    <citation type="journal article" date="2001" name="Planta">
        <title>Identification of a transcription factor specifically expressed at the onset of leaf senescence.</title>
        <authorList>
            <person name="Hinderhofer K."/>
            <person name="Zentgraf U."/>
        </authorList>
    </citation>
    <scope>INDUCTION</scope>
    <source>
        <strain>cv. Columbia</strain>
    </source>
</reference>
<reference key="8">
    <citation type="journal article" date="2007" name="Plant Cell">
        <title>The antagonist function of Arabidopsis WRKY53 and ESR/ESP in leaf senescence is modulated by the jasmonic and salicylic acid equilibrium.</title>
        <authorList>
            <person name="Miao Y."/>
            <person name="Zentgraf U."/>
        </authorList>
    </citation>
    <scope>FUNCTION</scope>
    <scope>SUBCELLULAR LOCATION</scope>
    <scope>INDUCTION</scope>
    <scope>INTERACTION WITH ESP</scope>
    <scope>DISRUPTION PHENOTYPE</scope>
</reference>
<reference key="9">
    <citation type="journal article" date="2010" name="Plant J.">
        <title>A HECT E3 ubiquitin ligase negatively regulates Arabidopsis leaf senescence through degradation of the transcription factor WRKY53.</title>
        <authorList>
            <person name="Miao Y."/>
            <person name="Zentgraf U."/>
        </authorList>
    </citation>
    <scope>FUNCTION</scope>
    <scope>INTERACTION WITH UPL5</scope>
    <scope>UBIQUITINATION</scope>
</reference>
<reference key="10">
    <citation type="journal article" date="2012" name="J. Exp. Bot.">
        <title>WRKY54 and WRKY70 co-operate as negative regulators of leaf senescence in Arabidopsis thaliana.</title>
        <authorList>
            <person name="Besseau S."/>
            <person name="Li J."/>
            <person name="Palva E.T."/>
        </authorList>
    </citation>
    <scope>FUNCTION</scope>
    <scope>INTERACTION WITH WRKY30</scope>
    <scope>INDUCTION BY SALICYLIC ACID</scope>
    <scope>DEVELOPMENTAL STAGE</scope>
    <source>
        <strain>cv. Columbia</strain>
    </source>
</reference>
<reference key="11">
    <citation type="journal article" date="2012" name="Plant Sci.">
        <title>Arabidopsis WRKY46 coordinates with WRKY70 and WRKY53 in basal resistance against pathogen Pseudomonas syringae.</title>
        <authorList>
            <person name="Hu Y."/>
            <person name="Dong Q."/>
            <person name="Yu D."/>
        </authorList>
    </citation>
    <scope>FUNCTION</scope>
    <scope>DISRUPTION PHENOTYPE</scope>
    <scope>INDUCTION BY SALICYLIC ACID AND PSEUDOMONAS SYRINGAE</scope>
    <source>
        <strain>cv. Columbia</strain>
    </source>
</reference>
<accession>Q9SUP6</accession>
<accession>Q0WSJ2</accession>
<organism>
    <name type="scientific">Arabidopsis thaliana</name>
    <name type="common">Mouse-ear cress</name>
    <dbReference type="NCBI Taxonomy" id="3702"/>
    <lineage>
        <taxon>Eukaryota</taxon>
        <taxon>Viridiplantae</taxon>
        <taxon>Streptophyta</taxon>
        <taxon>Embryophyta</taxon>
        <taxon>Tracheophyta</taxon>
        <taxon>Spermatophyta</taxon>
        <taxon>Magnoliopsida</taxon>
        <taxon>eudicotyledons</taxon>
        <taxon>Gunneridae</taxon>
        <taxon>Pentapetalae</taxon>
        <taxon>rosids</taxon>
        <taxon>malvids</taxon>
        <taxon>Brassicales</taxon>
        <taxon>Brassicaceae</taxon>
        <taxon>Camelineae</taxon>
        <taxon>Arabidopsis</taxon>
    </lineage>
</organism>
<gene>
    <name evidence="9" type="primary">WRKY53</name>
    <name evidence="11" type="ordered locus">At4g23810</name>
    <name evidence="12" type="ORF">F9D16.280</name>
</gene>
<comment type="function">
    <text evidence="5 6 8">Transcription factor. Interacts specifically with the W box (5'-(T)TGAC[CT]-3'), a frequently occurring elicitor-responsive cis-acting element (PubMed:20409006). May regulate the early events of leaf senescence (PubMed:17369373, PubMed:20409006). Negatively regulates the expression of ESR/ESP (PubMed:20409006). Together with WRKY46 and WRKY70, promotes resistance to P.syringae, probably by enhancing salicylic acid (SA)- dependent genes. Contributes to the suppression of jasmonic acid (MeJA)-induced expression of PDF1.2 (PubMed:22325892).</text>
</comment>
<comment type="subunit">
    <text evidence="5 6 7">Interacts with ESR/ESP and UPL5 (PubMed:17369373, PubMed:20409006). Binds to WRKY30 (PubMed:22268143).</text>
</comment>
<comment type="interaction">
    <interactant intactId="EBI-1235980">
        <id>Q9SUP6</id>
    </interactant>
    <interactant intactId="EBI-1235664">
        <id>P25854</id>
        <label>CAM4</label>
    </interactant>
    <organismsDiffer>false</organismsDiffer>
    <experiments>2</experiments>
</comment>
<comment type="interaction">
    <interactant intactId="EBI-1235980">
        <id>Q9SUP6</id>
    </interactant>
    <interactant intactId="EBI-1236097">
        <id>Q03509</id>
        <label>CAM6</label>
    </interactant>
    <organismsDiffer>false</organismsDiffer>
    <experiments>2</experiments>
</comment>
<comment type="interaction">
    <interactant intactId="EBI-1235980">
        <id>Q9SUP6</id>
    </interactant>
    <interactant intactId="EBI-1236048">
        <id>Q9S744</id>
        <label>CML9</label>
    </interactant>
    <organismsDiffer>false</organismsDiffer>
    <experiments>2</experiments>
</comment>
<comment type="interaction">
    <interactant intactId="EBI-1235980">
        <id>Q9SUP6</id>
    </interactant>
    <interactant intactId="EBI-1997188">
        <id>Q8RY71</id>
        <label>ESP</label>
    </interactant>
    <organismsDiffer>false</organismsDiffer>
    <experiments>6</experiments>
</comment>
<comment type="interaction">
    <interactant intactId="EBI-1235980">
        <id>Q9SUP6</id>
    </interactant>
    <interactant intactId="EBI-994439">
        <id>Q39008</id>
        <label>MEKK1</label>
    </interactant>
    <organismsDiffer>false</organismsDiffer>
    <experiments>5</experiments>
</comment>
<comment type="subcellular location">
    <subcellularLocation>
        <location evidence="1 5">Nucleus</location>
    </subcellularLocation>
</comment>
<comment type="developmental stage">
    <text evidence="7">Accumulates during developmental leaf senescence.</text>
</comment>
<comment type="induction">
    <text evidence="3 4 5 7 8">By salicylic acid (SA) (PubMed:22268143, PubMed:22325892). Strong accumulation during leaf senescence (PubMed:22268143). Down-regulated by jasmonate. Triggered by P.syringae (PubMed:22325892).</text>
</comment>
<comment type="PTM">
    <text evidence="6">Ubiquitinated by UPL5. Ubiquitination leads to its subsequent degradation, thus controlling the timing of leaf senescence.</text>
</comment>
<comment type="disruption phenotype">
    <text evidence="5 8">Retarded leaf senescence, but no effects on pathogen resistance (PubMed:17369373). Increased susceptibility to P.syringae associated with reduced PR1 induction; stronger symptoms in double mutants wrky46 wrky70 and wrky46 wrky53, and triple mutant wrky46 wrky70 wrky53. In these mutants, higher induction of PDF1.2 upon jasmonic acid (MeJA) treatment (PubMed:22325892).</text>
</comment>
<comment type="similarity">
    <text evidence="10">Belongs to the WRKY group III family.</text>
</comment>
<evidence type="ECO:0000255" key="1">
    <source>
        <dbReference type="PROSITE-ProRule" id="PRU00223"/>
    </source>
</evidence>
<evidence type="ECO:0000256" key="2">
    <source>
        <dbReference type="SAM" id="MobiDB-lite"/>
    </source>
</evidence>
<evidence type="ECO:0000269" key="3">
    <source>
    </source>
</evidence>
<evidence type="ECO:0000269" key="4">
    <source>
    </source>
</evidence>
<evidence type="ECO:0000269" key="5">
    <source>
    </source>
</evidence>
<evidence type="ECO:0000269" key="6">
    <source>
    </source>
</evidence>
<evidence type="ECO:0000269" key="7">
    <source>
    </source>
</evidence>
<evidence type="ECO:0000269" key="8">
    <source>
    </source>
</evidence>
<evidence type="ECO:0000303" key="9">
    <source>
    </source>
</evidence>
<evidence type="ECO:0000305" key="10"/>
<evidence type="ECO:0000312" key="11">
    <source>
        <dbReference type="Araport" id="AT4G23810"/>
    </source>
</evidence>
<evidence type="ECO:0000312" key="12">
    <source>
        <dbReference type="EMBL" id="CAA23047.1"/>
    </source>
</evidence>
<feature type="chain" id="PRO_0000133694" description="Probable WRKY transcription factor 53">
    <location>
        <begin position="1"/>
        <end position="324"/>
    </location>
</feature>
<feature type="DNA-binding region" description="WRKY" evidence="1">
    <location>
        <begin position="152"/>
        <end position="220"/>
    </location>
</feature>
<feature type="region of interest" description="Disordered" evidence="2">
    <location>
        <begin position="93"/>
        <end position="126"/>
    </location>
</feature>
<dbReference type="EMBL" id="AF272748">
    <property type="protein sequence ID" value="AAK28442.1"/>
    <property type="molecule type" value="mRNA"/>
</dbReference>
<dbReference type="EMBL" id="AL035394">
    <property type="protein sequence ID" value="CAA23047.1"/>
    <property type="molecule type" value="Genomic_DNA"/>
</dbReference>
<dbReference type="EMBL" id="AL161560">
    <property type="protein sequence ID" value="CAB81299.1"/>
    <property type="molecule type" value="Genomic_DNA"/>
</dbReference>
<dbReference type="EMBL" id="CP002687">
    <property type="protein sequence ID" value="AEE84809.1"/>
    <property type="molecule type" value="Genomic_DNA"/>
</dbReference>
<dbReference type="EMBL" id="AF370614">
    <property type="protein sequence ID" value="AAK43933.1"/>
    <property type="molecule type" value="mRNA"/>
</dbReference>
<dbReference type="EMBL" id="BT033113">
    <property type="protein sequence ID" value="ACF20468.1"/>
    <property type="molecule type" value="mRNA"/>
</dbReference>
<dbReference type="EMBL" id="AK227938">
    <property type="protein sequence ID" value="BAE99906.1"/>
    <property type="molecule type" value="mRNA"/>
</dbReference>
<dbReference type="PIR" id="T05613">
    <property type="entry name" value="T05613"/>
</dbReference>
<dbReference type="RefSeq" id="NP_194112.1">
    <property type="nucleotide sequence ID" value="NM_118512.3"/>
</dbReference>
<dbReference type="SMR" id="Q9SUP6"/>
<dbReference type="BioGRID" id="13770">
    <property type="interactions" value="17"/>
</dbReference>
<dbReference type="FunCoup" id="Q9SUP6">
    <property type="interactions" value="117"/>
</dbReference>
<dbReference type="IntAct" id="Q9SUP6">
    <property type="interactions" value="10"/>
</dbReference>
<dbReference type="STRING" id="3702.Q9SUP6"/>
<dbReference type="iPTMnet" id="Q9SUP6"/>
<dbReference type="PaxDb" id="3702-AT4G23810.1"/>
<dbReference type="ProteomicsDB" id="234416"/>
<dbReference type="EnsemblPlants" id="AT4G23810.1">
    <property type="protein sequence ID" value="AT4G23810.1"/>
    <property type="gene ID" value="AT4G23810"/>
</dbReference>
<dbReference type="GeneID" id="828481"/>
<dbReference type="Gramene" id="AT4G23810.1">
    <property type="protein sequence ID" value="AT4G23810.1"/>
    <property type="gene ID" value="AT4G23810"/>
</dbReference>
<dbReference type="KEGG" id="ath:AT4G23810"/>
<dbReference type="Araport" id="AT4G23810"/>
<dbReference type="TAIR" id="AT4G23810">
    <property type="gene designation" value="WRKY53"/>
</dbReference>
<dbReference type="eggNOG" id="ENOG502QPRM">
    <property type="taxonomic scope" value="Eukaryota"/>
</dbReference>
<dbReference type="HOGENOM" id="CLU_058534_0_0_1"/>
<dbReference type="InParanoid" id="Q9SUP6"/>
<dbReference type="OMA" id="FRNTQGC"/>
<dbReference type="OrthoDB" id="1888929at2759"/>
<dbReference type="PhylomeDB" id="Q9SUP6"/>
<dbReference type="PRO" id="PR:Q9SUP6"/>
<dbReference type="Proteomes" id="UP000006548">
    <property type="component" value="Chromosome 4"/>
</dbReference>
<dbReference type="ExpressionAtlas" id="Q9SUP6">
    <property type="expression patterns" value="baseline and differential"/>
</dbReference>
<dbReference type="GO" id="GO:0009507">
    <property type="term" value="C:chloroplast"/>
    <property type="evidence" value="ECO:0007005"/>
    <property type="project" value="TAIR"/>
</dbReference>
<dbReference type="GO" id="GO:0005634">
    <property type="term" value="C:nucleus"/>
    <property type="evidence" value="ECO:0000314"/>
    <property type="project" value="TAIR"/>
</dbReference>
<dbReference type="GO" id="GO:0003677">
    <property type="term" value="F:DNA binding"/>
    <property type="evidence" value="ECO:0000314"/>
    <property type="project" value="TAIR"/>
</dbReference>
<dbReference type="GO" id="GO:0003700">
    <property type="term" value="F:DNA-binding transcription factor activity"/>
    <property type="evidence" value="ECO:0000315"/>
    <property type="project" value="TAIR"/>
</dbReference>
<dbReference type="GO" id="GO:0043565">
    <property type="term" value="F:sequence-specific DNA binding"/>
    <property type="evidence" value="ECO:0007669"/>
    <property type="project" value="InterPro"/>
</dbReference>
<dbReference type="GO" id="GO:0042742">
    <property type="term" value="P:defense response to bacterium"/>
    <property type="evidence" value="ECO:0000315"/>
    <property type="project" value="UniProtKB"/>
</dbReference>
<dbReference type="GO" id="GO:0010150">
    <property type="term" value="P:leaf senescence"/>
    <property type="evidence" value="ECO:0000315"/>
    <property type="project" value="TAIR"/>
</dbReference>
<dbReference type="GO" id="GO:0045893">
    <property type="term" value="P:positive regulation of DNA-templated transcription"/>
    <property type="evidence" value="ECO:0000314"/>
    <property type="project" value="TAIR"/>
</dbReference>
<dbReference type="GO" id="GO:0031347">
    <property type="term" value="P:regulation of defense response"/>
    <property type="evidence" value="ECO:0000315"/>
    <property type="project" value="TAIR"/>
</dbReference>
<dbReference type="GO" id="GO:2000022">
    <property type="term" value="P:regulation of jasmonic acid mediated signaling pathway"/>
    <property type="evidence" value="ECO:0000315"/>
    <property type="project" value="UniProtKB"/>
</dbReference>
<dbReference type="GO" id="GO:0009617">
    <property type="term" value="P:response to bacterium"/>
    <property type="evidence" value="ECO:0000270"/>
    <property type="project" value="UniProtKB"/>
</dbReference>
<dbReference type="GO" id="GO:0042542">
    <property type="term" value="P:response to hydrogen peroxide"/>
    <property type="evidence" value="ECO:0000270"/>
    <property type="project" value="TAIR"/>
</dbReference>
<dbReference type="GO" id="GO:0010193">
    <property type="term" value="P:response to ozone"/>
    <property type="evidence" value="ECO:0000270"/>
    <property type="project" value="TAIR"/>
</dbReference>
<dbReference type="GO" id="GO:0009751">
    <property type="term" value="P:response to salicylic acid"/>
    <property type="evidence" value="ECO:0000270"/>
    <property type="project" value="UniProtKB"/>
</dbReference>
<dbReference type="FunFam" id="2.20.25.80:FF:000009">
    <property type="entry name" value="WRKY transcription factor 53"/>
    <property type="match status" value="1"/>
</dbReference>
<dbReference type="Gene3D" id="2.20.25.80">
    <property type="entry name" value="WRKY domain"/>
    <property type="match status" value="1"/>
</dbReference>
<dbReference type="InterPro" id="IPR003657">
    <property type="entry name" value="WRKY_dom"/>
</dbReference>
<dbReference type="InterPro" id="IPR036576">
    <property type="entry name" value="WRKY_dom_sf"/>
</dbReference>
<dbReference type="InterPro" id="IPR044810">
    <property type="entry name" value="WRKY_plant"/>
</dbReference>
<dbReference type="PANTHER" id="PTHR32096">
    <property type="entry name" value="WRKY TRANSCRIPTION FACTOR 30-RELATED-RELATED"/>
    <property type="match status" value="1"/>
</dbReference>
<dbReference type="PANTHER" id="PTHR32096:SF94">
    <property type="entry name" value="WRKY TRANSCRIPTION FACTOR 53-RELATED"/>
    <property type="match status" value="1"/>
</dbReference>
<dbReference type="Pfam" id="PF03106">
    <property type="entry name" value="WRKY"/>
    <property type="match status" value="1"/>
</dbReference>
<dbReference type="SMART" id="SM00774">
    <property type="entry name" value="WRKY"/>
    <property type="match status" value="1"/>
</dbReference>
<dbReference type="SUPFAM" id="SSF118290">
    <property type="entry name" value="WRKY DNA-binding domain"/>
    <property type="match status" value="1"/>
</dbReference>
<dbReference type="PROSITE" id="PS50811">
    <property type="entry name" value="WRKY"/>
    <property type="match status" value="1"/>
</dbReference>
<proteinExistence type="evidence at protein level"/>
<protein>
    <recommendedName>
        <fullName evidence="9">Probable WRKY transcription factor 53</fullName>
    </recommendedName>
    <alternativeName>
        <fullName evidence="9">WRKY DNA-binding protein 53</fullName>
    </alternativeName>
</protein>
<sequence>MEGRDMLSWEQKTLLSELINGFDAAKKLQARLREAPSPSSSFSSPATAVAETNEILVKQIVSSYERSLLLLNWSSSPSVQLIPTPVTVVPVANPGSVPESPASINGSPRSEEFADGGGSSESHHRQDYIFNSKKRKMLPKWSEKVRISPERGLEGPQDDVFSWRKYGQKDILGAKFPRSYYRCTHRSTQNCWATKQVQRSDGDATVFEVTYRGTHTCSQAITRTPPLASPEKRQDTRVKPAITQKPKDILESLKSNLTVRTDGLDDGKDVFSFPDTPPFYNYGTINGEFGHVESSPIFDVVDWFNPTVEIDTTFPAFLHESIYY</sequence>
<keyword id="KW-0238">DNA-binding</keyword>
<keyword id="KW-1184">Jasmonic acid signaling pathway</keyword>
<keyword id="KW-0539">Nucleus</keyword>
<keyword id="KW-0611">Plant defense</keyword>
<keyword id="KW-1185">Reference proteome</keyword>
<keyword id="KW-0804">Transcription</keyword>
<keyword id="KW-0805">Transcription regulation</keyword>
<keyword id="KW-0832">Ubl conjugation</keyword>
<name>WRK53_ARATH</name>